<evidence type="ECO:0000255" key="1">
    <source>
        <dbReference type="HAMAP-Rule" id="MF_00003"/>
    </source>
</evidence>
<protein>
    <recommendedName>
        <fullName evidence="1">Ribosome-binding factor A</fullName>
    </recommendedName>
</protein>
<reference key="1">
    <citation type="journal article" date="2009" name="J. Bacteriol.">
        <title>Genomic sequencing reveals regulatory mutations and recombinational events in the widely used MC4100 lineage of Escherichia coli K-12.</title>
        <authorList>
            <person name="Ferenci T."/>
            <person name="Zhou Z."/>
            <person name="Betteridge T."/>
            <person name="Ren Y."/>
            <person name="Liu Y."/>
            <person name="Feng L."/>
            <person name="Reeves P.R."/>
            <person name="Wang L."/>
        </authorList>
    </citation>
    <scope>NUCLEOTIDE SEQUENCE [LARGE SCALE GENOMIC DNA]</scope>
    <source>
        <strain>K12 / MC4100 / BW2952</strain>
    </source>
</reference>
<keyword id="KW-0963">Cytoplasm</keyword>
<keyword id="KW-0690">Ribosome biogenesis</keyword>
<name>RBFA_ECOBW</name>
<comment type="function">
    <text evidence="1">One of several proteins that assist in the late maturation steps of the functional core of the 30S ribosomal subunit. Associates with free 30S ribosomal subunits (but not with 30S subunits that are part of 70S ribosomes or polysomes). Required for efficient processing of 16S rRNA. May interact with the 5'-terminal helix region of 16S rRNA.</text>
</comment>
<comment type="subunit">
    <text evidence="1">Monomer. Binds 30S ribosomal subunits, but not 50S ribosomal subunits or 70S ribosomes.</text>
</comment>
<comment type="subcellular location">
    <subcellularLocation>
        <location evidence="1">Cytoplasm</location>
    </subcellularLocation>
</comment>
<comment type="similarity">
    <text evidence="1">Belongs to the RbfA family.</text>
</comment>
<proteinExistence type="inferred from homology"/>
<sequence>MAKEFGRPQRVAQEMQKEIALILQREIKDPRLGMMTTVSGVEMSRDLAYAKVYVTFLNDKDEDAVKAGIKALQEASGFIRSLLGKAMRLRIVPELTFFYDNSLVEGMRMSNLVTSVVKHDEERRVNPDDSKED</sequence>
<gene>
    <name evidence="1" type="primary">rbfA</name>
    <name type="ordered locus">BWG_2871</name>
</gene>
<dbReference type="EMBL" id="CP001396">
    <property type="protein sequence ID" value="ACR61803.1"/>
    <property type="molecule type" value="Genomic_DNA"/>
</dbReference>
<dbReference type="RefSeq" id="WP_001040205.1">
    <property type="nucleotide sequence ID" value="NC_012759.1"/>
</dbReference>
<dbReference type="SMR" id="C4ZSQ8"/>
<dbReference type="GeneID" id="93778816"/>
<dbReference type="KEGG" id="ebw:BWG_2871"/>
<dbReference type="HOGENOM" id="CLU_089475_5_0_6"/>
<dbReference type="GO" id="GO:0005829">
    <property type="term" value="C:cytosol"/>
    <property type="evidence" value="ECO:0007669"/>
    <property type="project" value="TreeGrafter"/>
</dbReference>
<dbReference type="GO" id="GO:0043024">
    <property type="term" value="F:ribosomal small subunit binding"/>
    <property type="evidence" value="ECO:0007669"/>
    <property type="project" value="TreeGrafter"/>
</dbReference>
<dbReference type="GO" id="GO:0030490">
    <property type="term" value="P:maturation of SSU-rRNA"/>
    <property type="evidence" value="ECO:0007669"/>
    <property type="project" value="UniProtKB-UniRule"/>
</dbReference>
<dbReference type="FunFam" id="3.30.300.20:FF:000007">
    <property type="entry name" value="Ribosome-binding factor A"/>
    <property type="match status" value="1"/>
</dbReference>
<dbReference type="Gene3D" id="3.30.300.20">
    <property type="match status" value="1"/>
</dbReference>
<dbReference type="HAMAP" id="MF_00003">
    <property type="entry name" value="RbfA"/>
    <property type="match status" value="1"/>
</dbReference>
<dbReference type="InterPro" id="IPR015946">
    <property type="entry name" value="KH_dom-like_a/b"/>
</dbReference>
<dbReference type="InterPro" id="IPR000238">
    <property type="entry name" value="RbfA"/>
</dbReference>
<dbReference type="InterPro" id="IPR023799">
    <property type="entry name" value="RbfA_dom_sf"/>
</dbReference>
<dbReference type="InterPro" id="IPR020053">
    <property type="entry name" value="Ribosome-bd_factorA_CS"/>
</dbReference>
<dbReference type="NCBIfam" id="TIGR00082">
    <property type="entry name" value="rbfA"/>
    <property type="match status" value="1"/>
</dbReference>
<dbReference type="PANTHER" id="PTHR33515">
    <property type="entry name" value="RIBOSOME-BINDING FACTOR A, CHLOROPLASTIC-RELATED"/>
    <property type="match status" value="1"/>
</dbReference>
<dbReference type="PANTHER" id="PTHR33515:SF1">
    <property type="entry name" value="RIBOSOME-BINDING FACTOR A, CHLOROPLASTIC-RELATED"/>
    <property type="match status" value="1"/>
</dbReference>
<dbReference type="Pfam" id="PF02033">
    <property type="entry name" value="RBFA"/>
    <property type="match status" value="1"/>
</dbReference>
<dbReference type="SUPFAM" id="SSF89919">
    <property type="entry name" value="Ribosome-binding factor A, RbfA"/>
    <property type="match status" value="1"/>
</dbReference>
<dbReference type="PROSITE" id="PS01319">
    <property type="entry name" value="RBFA"/>
    <property type="match status" value="1"/>
</dbReference>
<accession>C4ZSQ8</accession>
<organism>
    <name type="scientific">Escherichia coli (strain K12 / MC4100 / BW2952)</name>
    <dbReference type="NCBI Taxonomy" id="595496"/>
    <lineage>
        <taxon>Bacteria</taxon>
        <taxon>Pseudomonadati</taxon>
        <taxon>Pseudomonadota</taxon>
        <taxon>Gammaproteobacteria</taxon>
        <taxon>Enterobacterales</taxon>
        <taxon>Enterobacteriaceae</taxon>
        <taxon>Escherichia</taxon>
    </lineage>
</organism>
<feature type="chain" id="PRO_1000201628" description="Ribosome-binding factor A">
    <location>
        <begin position="1"/>
        <end position="133"/>
    </location>
</feature>